<comment type="function">
    <text evidence="1">Catalyzes the NAD(+)-dependent oxidation of L-threonine to 2-amino-3-ketobutyrate.</text>
</comment>
<comment type="catalytic activity">
    <reaction evidence="1">
        <text>L-threonine + NAD(+) = (2S)-2-amino-3-oxobutanoate + NADH + H(+)</text>
        <dbReference type="Rhea" id="RHEA:13161"/>
        <dbReference type="ChEBI" id="CHEBI:15378"/>
        <dbReference type="ChEBI" id="CHEBI:57540"/>
        <dbReference type="ChEBI" id="CHEBI:57926"/>
        <dbReference type="ChEBI" id="CHEBI:57945"/>
        <dbReference type="ChEBI" id="CHEBI:78948"/>
        <dbReference type="EC" id="1.1.1.103"/>
    </reaction>
</comment>
<comment type="cofactor">
    <cofactor evidence="1">
        <name>Zn(2+)</name>
        <dbReference type="ChEBI" id="CHEBI:29105"/>
    </cofactor>
    <text evidence="1">Binds 2 Zn(2+) ions per subunit.</text>
</comment>
<comment type="pathway">
    <text evidence="1">Amino-acid degradation; L-threonine degradation via oxydo-reductase pathway; glycine from L-threonine: step 1/2.</text>
</comment>
<comment type="subunit">
    <text evidence="1">Homotetramer.</text>
</comment>
<comment type="subcellular location">
    <subcellularLocation>
        <location evidence="1">Cytoplasm</location>
    </subcellularLocation>
</comment>
<comment type="similarity">
    <text evidence="1">Belongs to the zinc-containing alcohol dehydrogenase family.</text>
</comment>
<comment type="sequence caution" evidence="2">
    <conflict type="erroneous initiation">
        <sequence resource="EMBL-CDS" id="ABS77967"/>
    </conflict>
</comment>
<evidence type="ECO:0000255" key="1">
    <source>
        <dbReference type="HAMAP-Rule" id="MF_00627"/>
    </source>
</evidence>
<evidence type="ECO:0000305" key="2"/>
<gene>
    <name evidence="1" type="primary">tdh</name>
    <name type="ordered locus">CBUD_1995</name>
</gene>
<feature type="chain" id="PRO_1000082608" description="L-threonine 3-dehydrogenase">
    <location>
        <begin position="1"/>
        <end position="342"/>
    </location>
</feature>
<feature type="active site" description="Charge relay system" evidence="1">
    <location>
        <position position="40"/>
    </location>
</feature>
<feature type="active site" description="Charge relay system" evidence="1">
    <location>
        <position position="43"/>
    </location>
</feature>
<feature type="binding site" evidence="1">
    <location>
        <position position="38"/>
    </location>
    <ligand>
        <name>Zn(2+)</name>
        <dbReference type="ChEBI" id="CHEBI:29105"/>
        <label>1</label>
        <note>catalytic</note>
    </ligand>
</feature>
<feature type="binding site" evidence="1">
    <location>
        <position position="63"/>
    </location>
    <ligand>
        <name>Zn(2+)</name>
        <dbReference type="ChEBI" id="CHEBI:29105"/>
        <label>1</label>
        <note>catalytic</note>
    </ligand>
</feature>
<feature type="binding site" evidence="1">
    <location>
        <position position="64"/>
    </location>
    <ligand>
        <name>Zn(2+)</name>
        <dbReference type="ChEBI" id="CHEBI:29105"/>
        <label>1</label>
        <note>catalytic</note>
    </ligand>
</feature>
<feature type="binding site" evidence="1">
    <location>
        <position position="93"/>
    </location>
    <ligand>
        <name>Zn(2+)</name>
        <dbReference type="ChEBI" id="CHEBI:29105"/>
        <label>2</label>
    </ligand>
</feature>
<feature type="binding site" evidence="1">
    <location>
        <position position="96"/>
    </location>
    <ligand>
        <name>Zn(2+)</name>
        <dbReference type="ChEBI" id="CHEBI:29105"/>
        <label>2</label>
    </ligand>
</feature>
<feature type="binding site" evidence="1">
    <location>
        <position position="99"/>
    </location>
    <ligand>
        <name>Zn(2+)</name>
        <dbReference type="ChEBI" id="CHEBI:29105"/>
        <label>2</label>
    </ligand>
</feature>
<feature type="binding site" evidence="1">
    <location>
        <position position="107"/>
    </location>
    <ligand>
        <name>Zn(2+)</name>
        <dbReference type="ChEBI" id="CHEBI:29105"/>
        <label>2</label>
    </ligand>
</feature>
<feature type="binding site" evidence="1">
    <location>
        <position position="175"/>
    </location>
    <ligand>
        <name>NAD(+)</name>
        <dbReference type="ChEBI" id="CHEBI:57540"/>
    </ligand>
</feature>
<feature type="binding site" evidence="1">
    <location>
        <position position="195"/>
    </location>
    <ligand>
        <name>NAD(+)</name>
        <dbReference type="ChEBI" id="CHEBI:57540"/>
    </ligand>
</feature>
<feature type="binding site" evidence="1">
    <location>
        <position position="200"/>
    </location>
    <ligand>
        <name>NAD(+)</name>
        <dbReference type="ChEBI" id="CHEBI:57540"/>
    </ligand>
</feature>
<feature type="binding site" evidence="1">
    <location>
        <begin position="262"/>
        <end position="264"/>
    </location>
    <ligand>
        <name>NAD(+)</name>
        <dbReference type="ChEBI" id="CHEBI:57540"/>
    </ligand>
</feature>
<feature type="binding site" evidence="1">
    <location>
        <begin position="286"/>
        <end position="287"/>
    </location>
    <ligand>
        <name>NAD(+)</name>
        <dbReference type="ChEBI" id="CHEBI:57540"/>
    </ligand>
</feature>
<feature type="site" description="Important for catalytic activity for the proton relay mechanism but does not participate directly in the coordination of zinc atom" evidence="1">
    <location>
        <position position="148"/>
    </location>
</feature>
<name>TDH_COXBN</name>
<proteinExistence type="inferred from homology"/>
<dbReference type="EC" id="1.1.1.103" evidence="1"/>
<dbReference type="EMBL" id="CP000733">
    <property type="protein sequence ID" value="ABS77967.2"/>
    <property type="status" value="ALT_INIT"/>
    <property type="molecule type" value="Genomic_DNA"/>
</dbReference>
<dbReference type="RefSeq" id="WP_005769439.1">
    <property type="nucleotide sequence ID" value="NC_009727.1"/>
</dbReference>
<dbReference type="SMR" id="A9KET6"/>
<dbReference type="KEGG" id="cbd:CBUD_1995"/>
<dbReference type="HOGENOM" id="CLU_026673_11_0_6"/>
<dbReference type="UniPathway" id="UPA00046">
    <property type="reaction ID" value="UER00505"/>
</dbReference>
<dbReference type="Proteomes" id="UP000008555">
    <property type="component" value="Chromosome"/>
</dbReference>
<dbReference type="GO" id="GO:0005737">
    <property type="term" value="C:cytoplasm"/>
    <property type="evidence" value="ECO:0007669"/>
    <property type="project" value="UniProtKB-SubCell"/>
</dbReference>
<dbReference type="GO" id="GO:0008743">
    <property type="term" value="F:L-threonine 3-dehydrogenase activity"/>
    <property type="evidence" value="ECO:0007669"/>
    <property type="project" value="UniProtKB-UniRule"/>
</dbReference>
<dbReference type="GO" id="GO:0008270">
    <property type="term" value="F:zinc ion binding"/>
    <property type="evidence" value="ECO:0007669"/>
    <property type="project" value="UniProtKB-UniRule"/>
</dbReference>
<dbReference type="GO" id="GO:0019518">
    <property type="term" value="P:L-threonine catabolic process to glycine"/>
    <property type="evidence" value="ECO:0007669"/>
    <property type="project" value="UniProtKB-UniPathway"/>
</dbReference>
<dbReference type="Gene3D" id="3.90.180.10">
    <property type="entry name" value="Medium-chain alcohol dehydrogenases, catalytic domain"/>
    <property type="match status" value="1"/>
</dbReference>
<dbReference type="Gene3D" id="3.40.50.720">
    <property type="entry name" value="NAD(P)-binding Rossmann-like Domain"/>
    <property type="match status" value="1"/>
</dbReference>
<dbReference type="HAMAP" id="MF_00627">
    <property type="entry name" value="Thr_dehydrog"/>
    <property type="match status" value="1"/>
</dbReference>
<dbReference type="InterPro" id="IPR013149">
    <property type="entry name" value="ADH-like_C"/>
</dbReference>
<dbReference type="InterPro" id="IPR013154">
    <property type="entry name" value="ADH-like_N"/>
</dbReference>
<dbReference type="InterPro" id="IPR002328">
    <property type="entry name" value="ADH_Zn_CS"/>
</dbReference>
<dbReference type="InterPro" id="IPR011032">
    <property type="entry name" value="GroES-like_sf"/>
</dbReference>
<dbReference type="InterPro" id="IPR004627">
    <property type="entry name" value="L-Threonine_3-DHase"/>
</dbReference>
<dbReference type="InterPro" id="IPR036291">
    <property type="entry name" value="NAD(P)-bd_dom_sf"/>
</dbReference>
<dbReference type="InterPro" id="IPR020843">
    <property type="entry name" value="PKS_ER"/>
</dbReference>
<dbReference type="InterPro" id="IPR050129">
    <property type="entry name" value="Zn_alcohol_dh"/>
</dbReference>
<dbReference type="NCBIfam" id="NF003808">
    <property type="entry name" value="PRK05396.1"/>
    <property type="match status" value="1"/>
</dbReference>
<dbReference type="NCBIfam" id="TIGR00692">
    <property type="entry name" value="tdh"/>
    <property type="match status" value="1"/>
</dbReference>
<dbReference type="PANTHER" id="PTHR43401">
    <property type="entry name" value="L-THREONINE 3-DEHYDROGENASE"/>
    <property type="match status" value="1"/>
</dbReference>
<dbReference type="PANTHER" id="PTHR43401:SF2">
    <property type="entry name" value="L-THREONINE 3-DEHYDROGENASE"/>
    <property type="match status" value="1"/>
</dbReference>
<dbReference type="Pfam" id="PF08240">
    <property type="entry name" value="ADH_N"/>
    <property type="match status" value="1"/>
</dbReference>
<dbReference type="Pfam" id="PF00107">
    <property type="entry name" value="ADH_zinc_N"/>
    <property type="match status" value="1"/>
</dbReference>
<dbReference type="SMART" id="SM00829">
    <property type="entry name" value="PKS_ER"/>
    <property type="match status" value="1"/>
</dbReference>
<dbReference type="SUPFAM" id="SSF50129">
    <property type="entry name" value="GroES-like"/>
    <property type="match status" value="1"/>
</dbReference>
<dbReference type="SUPFAM" id="SSF51735">
    <property type="entry name" value="NAD(P)-binding Rossmann-fold domains"/>
    <property type="match status" value="1"/>
</dbReference>
<dbReference type="PROSITE" id="PS00059">
    <property type="entry name" value="ADH_ZINC"/>
    <property type="match status" value="1"/>
</dbReference>
<keyword id="KW-0963">Cytoplasm</keyword>
<keyword id="KW-0479">Metal-binding</keyword>
<keyword id="KW-0520">NAD</keyword>
<keyword id="KW-0560">Oxidoreductase</keyword>
<keyword id="KW-0862">Zinc</keyword>
<sequence>MKVLSKLKPAPGLWLHKAPTPKPGRDEVLIKIKKTAICGTDLHIYKWDEWAQKTIPVPMHVGHEFVGEIVEVGEAASALAVGDRVSGEGHITCGDCRNCRAGKRHLCRYTVGVGVNRPGAFAEYLVIPAKNAYKIPAKISDDIAAILDPFGNAAHSALEFDLVGEDVLITGAGPVGLMSAAIARHVGARHVVITDVNDYRLALAEKVGVTAAVNSTKTPLTETMKNLGMTEGFDVGLEMSGNAEAFRSMLTVMNNGGKIAFLGIPPEPFAIDWNQVVFKSLLIKGIYGRRMFETWYKMTNLLLSGLDISPIITHEFPMKDFQQAFDVMLSGKTGKVILNWEQ</sequence>
<reference key="1">
    <citation type="journal article" date="2009" name="Infect. Immun.">
        <title>Comparative genomics reveal extensive transposon-mediated genomic plasticity and diversity among potential effector proteins within the genus Coxiella.</title>
        <authorList>
            <person name="Beare P.A."/>
            <person name="Unsworth N."/>
            <person name="Andoh M."/>
            <person name="Voth D.E."/>
            <person name="Omsland A."/>
            <person name="Gilk S.D."/>
            <person name="Williams K.P."/>
            <person name="Sobral B.W."/>
            <person name="Kupko J.J. III"/>
            <person name="Porcella S.F."/>
            <person name="Samuel J.E."/>
            <person name="Heinzen R.A."/>
        </authorList>
    </citation>
    <scope>NUCLEOTIDE SEQUENCE [LARGE SCALE GENOMIC DNA]</scope>
    <source>
        <strain>Dugway 5J108-111</strain>
    </source>
</reference>
<organism>
    <name type="scientific">Coxiella burnetii (strain Dugway 5J108-111)</name>
    <dbReference type="NCBI Taxonomy" id="434922"/>
    <lineage>
        <taxon>Bacteria</taxon>
        <taxon>Pseudomonadati</taxon>
        <taxon>Pseudomonadota</taxon>
        <taxon>Gammaproteobacteria</taxon>
        <taxon>Legionellales</taxon>
        <taxon>Coxiellaceae</taxon>
        <taxon>Coxiella</taxon>
    </lineage>
</organism>
<accession>A9KET6</accession>
<protein>
    <recommendedName>
        <fullName evidence="1">L-threonine 3-dehydrogenase</fullName>
        <shortName evidence="1">TDH</shortName>
        <ecNumber evidence="1">1.1.1.103</ecNumber>
    </recommendedName>
</protein>